<organism>
    <name type="scientific">Agrobacterium tumefaciens (strain 15955)</name>
    <dbReference type="NCBI Taxonomy" id="190386"/>
    <lineage>
        <taxon>Bacteria</taxon>
        <taxon>Pseudomonadati</taxon>
        <taxon>Pseudomonadota</taxon>
        <taxon>Alphaproteobacteria</taxon>
        <taxon>Hyphomicrobiales</taxon>
        <taxon>Rhizobiaceae</taxon>
        <taxon>Rhizobium/Agrobacterium group</taxon>
        <taxon>Agrobacterium</taxon>
        <taxon>Agrobacterium tumefaciens complex</taxon>
    </lineage>
</organism>
<dbReference type="EMBL" id="X06826">
    <property type="protein sequence ID" value="CAC15164.1"/>
    <property type="molecule type" value="Genomic_DNA"/>
</dbReference>
<dbReference type="RefSeq" id="NP_059805.1">
    <property type="nucleotide sequence ID" value="NC_002377.1"/>
</dbReference>
<dbReference type="GO" id="GO:0009279">
    <property type="term" value="C:cell outer membrane"/>
    <property type="evidence" value="ECO:0007669"/>
    <property type="project" value="UniProtKB-SubCell"/>
</dbReference>
<dbReference type="InterPro" id="IPR035545">
    <property type="entry name" value="VirB7"/>
</dbReference>
<dbReference type="NCBIfam" id="NF010433">
    <property type="entry name" value="PRK13859.1"/>
    <property type="match status" value="1"/>
</dbReference>
<dbReference type="Pfam" id="PF17413">
    <property type="entry name" value="VirB7"/>
    <property type="match status" value="1"/>
</dbReference>
<dbReference type="PROSITE" id="PS51257">
    <property type="entry name" value="PROKAR_LIPOPROTEIN"/>
    <property type="match status" value="1"/>
</dbReference>
<evidence type="ECO:0000250" key="1"/>
<evidence type="ECO:0000305" key="2"/>
<proteinExistence type="inferred from homology"/>
<geneLocation type="plasmid">
    <name>pTi15955</name>
</geneLocation>
<comment type="function">
    <text evidence="1">Is essential for the biogenesis of the T-pilus, which is required for virulence and T-DNA transfer to plant cells. When is associated with virB9, might function as a nucleation center for recruitment of VirB proteins during assembly of the T-DNA transfer machine (By similarity).</text>
</comment>
<comment type="subunit">
    <text evidence="1">Homodimer and heterodimer of virB7 and virB9; disulfide-linked.</text>
</comment>
<comment type="subcellular location">
    <subcellularLocation>
        <location>Cell outer membrane</location>
        <topology>Lipid-anchor</topology>
    </subcellularLocation>
    <text evidence="1">Also associated with the T-pilus when is a homodimer, possibly at the pilus base.</text>
</comment>
<comment type="miscellaneous">
    <text evidence="1">Is protease-resistant.</text>
</comment>
<comment type="miscellaneous">
    <text>Both virB7 lipid modification and disulfide cross-linking are important for T-pilus assembly.</text>
</comment>
<gene>
    <name type="primary">virB7</name>
</gene>
<keyword id="KW-0998">Cell outer membrane</keyword>
<keyword id="KW-0192">Crown gall tumor</keyword>
<keyword id="KW-1015">Disulfide bond</keyword>
<keyword id="KW-0449">Lipoprotein</keyword>
<keyword id="KW-0472">Membrane</keyword>
<keyword id="KW-0564">Palmitate</keyword>
<keyword id="KW-0614">Plasmid</keyword>
<keyword id="KW-0732">Signal</keyword>
<keyword id="KW-0843">Virulence</keyword>
<name>VIRB7_AGRT9</name>
<accession>P0A3W5</accession>
<accession>P09780</accession>
<sequence>MKYCLLCLVVALSGCQTNDTIASCKGPIFPLNVGRWQPTPSDLQLRNSGGRYDGA</sequence>
<protein>
    <recommendedName>
        <fullName>Outer membrane lipoprotein virB7</fullName>
    </recommendedName>
</protein>
<reference key="1">
    <citation type="journal article" date="1988" name="Nucleic Acids Res.">
        <title>Analysis of the complete nucleotide sequence of the Agrobacterium tumefaciens virB operon.</title>
        <authorList>
            <person name="Thompson D.V."/>
            <person name="Melchers L.S."/>
            <person name="Idler K.B."/>
            <person name="Shilperoort R.A."/>
            <person name="Hooykaas P.J.J."/>
        </authorList>
    </citation>
    <scope>NUCLEOTIDE SEQUENCE [GENOMIC DNA]</scope>
</reference>
<reference key="2">
    <citation type="submission" date="2000-03" db="EMBL/GenBank/DDBJ databases">
        <title>Octopine-type Ti plasmid sequence.</title>
        <authorList>
            <person name="Winans S.C."/>
            <person name="Zhu J."/>
            <person name="Oger P.M."/>
            <person name="Schrammeijer B."/>
            <person name="Hooykaas P.J."/>
            <person name="Farrand S.K."/>
        </authorList>
    </citation>
    <scope>NUCLEOTIDE SEQUENCE [GENOMIC DNA]</scope>
</reference>
<feature type="signal peptide" evidence="2">
    <location>
        <begin position="1"/>
        <end position="14"/>
    </location>
</feature>
<feature type="chain" id="PRO_0000022670" description="Outer membrane lipoprotein virB7">
    <location>
        <begin position="15"/>
        <end position="55"/>
    </location>
</feature>
<feature type="lipid moiety-binding region" description="N-palmitoyl cysteine" evidence="2">
    <location>
        <position position="15"/>
    </location>
</feature>
<feature type="lipid moiety-binding region" description="S-diacylglycerol cysteine" evidence="2">
    <location>
        <position position="15"/>
    </location>
</feature>
<feature type="disulfide bond" description="Interchain (with C-262 in virB9); in heterodimeric form" evidence="1">
    <location>
        <position position="24"/>
    </location>
</feature>
<feature type="disulfide bond" description="Interchain; in homodimeric form" evidence="1">
    <location>
        <position position="24"/>
    </location>
</feature>